<gene>
    <name type="primary">femX</name>
    <name type="synonym">fmhB</name>
    <name type="ordered locus">SAOUHSC_02527</name>
</gene>
<reference key="1">
    <citation type="submission" date="2001-09" db="EMBL/GenBank/DDBJ databases">
        <title>FemX and downstream region.</title>
        <authorList>
            <person name="Berger-Baechi B."/>
            <person name="Glanzmann P.J."/>
            <person name="Rohrer S."/>
            <person name="Tschierske M."/>
        </authorList>
    </citation>
    <scope>NUCLEOTIDE SEQUENCE [GENOMIC DNA]</scope>
</reference>
<reference key="2">
    <citation type="book" date="2006" name="Gram positive pathogens, 2nd edition">
        <title>The Staphylococcus aureus NCTC 8325 genome.</title>
        <editorList>
            <person name="Fischetti V."/>
            <person name="Novick R."/>
            <person name="Ferretti J."/>
            <person name="Portnoy D."/>
            <person name="Rood J."/>
        </editorList>
        <authorList>
            <person name="Gillaspy A.F."/>
            <person name="Worrell V."/>
            <person name="Orvis J."/>
            <person name="Roe B.A."/>
            <person name="Dyer D.W."/>
            <person name="Iandolo J.J."/>
        </authorList>
    </citation>
    <scope>NUCLEOTIDE SEQUENCE [LARGE SCALE GENOMIC DNA]</scope>
    <source>
        <strain>NCTC 8325 / PS 47</strain>
    </source>
</reference>
<reference key="3">
    <citation type="journal article" date="1996" name="Microb. Drug Resist.">
        <title>Staphylococcal peptidoglycan interpeptide bridge biosynthesis: a novel antistaphylococcal target?</title>
        <authorList>
            <person name="Kopp U."/>
            <person name="Roos M."/>
            <person name="Wecke J."/>
            <person name="Labischinski H."/>
        </authorList>
    </citation>
    <scope>FUNCTION</scope>
</reference>
<reference key="4">
    <citation type="journal article" date="1999" name="Proc. Natl. Acad. Sci. U.S.A.">
        <title>The essential Staphylococcus aureus gene fmhB is involved in the first step of peptidoglycan pentaglycine interpeptide formation.</title>
        <authorList>
            <person name="Rohrer S."/>
            <person name="Ehlert K."/>
            <person name="Tschierske M."/>
            <person name="Labischinski H."/>
            <person name="Berger-Baechi B."/>
        </authorList>
    </citation>
    <scope>FUNCTION</scope>
</reference>
<reference key="5">
    <citation type="journal article" date="2003" name="Microbiology">
        <title>Application of a bacterial two-hybrid system for the analysis of protein-protein interactions between femABX family proteins.</title>
        <authorList>
            <person name="Rohrer S."/>
            <person name="Berger-Baechi B."/>
        </authorList>
    </citation>
    <scope>SUBUNIT</scope>
</reference>
<reference key="6">
    <citation type="journal article" date="2004" name="Mol. Microbiol.">
        <title>In vitro assembly of a complete, pentaglycine interpeptide bridge containing cell wall precursor (lipid II-Gly5) of Staphylococcus aureus.</title>
        <authorList>
            <person name="Schneider T."/>
            <person name="Senn M.M."/>
            <person name="Berger-Baechi B."/>
            <person name="Tossi A."/>
            <person name="Sahl H.-G."/>
            <person name="Wiedemann I."/>
        </authorList>
    </citation>
    <scope>FUNCTION</scope>
    <scope>CATALYTIC ACTIVITY</scope>
</reference>
<protein>
    <recommendedName>
        <fullName>Lipid II:glycine glycyltransferase</fullName>
        <ecNumber>2.3.2.16</ecNumber>
    </recommendedName>
    <alternativeName>
        <fullName>Factor essential for expression of methicillin resistance X</fullName>
    </alternativeName>
</protein>
<sequence>MEKMHITNQEHDAFVKSHPNGDLLQLTKWAETKKLTGWYARRIAVGRDGEVQGVAQLLFKKVPKLPYTLCYISRGFVVDYSNKEALNALLDSAKEIAKAEKAYAIKIDPDVEVDKGTDALQNLKALGFKHKGFKEGLSKDYIQPRMTMITPIDKNDDELLNSFERRNRSKVRLALKRGTTVERSDREGLKTFAELMKITGERDGFLTRDISYFENIYDALHEDGDAELFLVKLDPKENIAKVNQELNELHAEIAKWQQKMKTSEKQAKKAQNMINDAQNKIAKNEDLKRDLEALEKEHPEGIYLSGALLMFAGSKSYYLYGASSNEFRDFLPNHHMQYTMMKYAREHGATTYDFGGTDNDPDKDSEHYGLWAFKKVWGTYLSEKIGEFDYVLNQPLYQLIEQVKPRLTKAKIKISRKLKRK</sequence>
<dbReference type="EC" id="2.3.2.16"/>
<dbReference type="EMBL" id="AF105976">
    <property type="protein sequence ID" value="AAF14182.2"/>
    <property type="molecule type" value="Genomic_DNA"/>
</dbReference>
<dbReference type="EMBL" id="CP000253">
    <property type="protein sequence ID" value="ABD31542.1"/>
    <property type="molecule type" value="Genomic_DNA"/>
</dbReference>
<dbReference type="RefSeq" id="WP_000413865.1">
    <property type="nucleotide sequence ID" value="NZ_LS483365.1"/>
</dbReference>
<dbReference type="RefSeq" id="YP_500991.1">
    <property type="nucleotide sequence ID" value="NC_007795.1"/>
</dbReference>
<dbReference type="PDB" id="6SNR">
    <property type="method" value="X-ray"/>
    <property type="resolution" value="1.62 A"/>
    <property type="chains" value="A=1-420"/>
</dbReference>
<dbReference type="PDBsum" id="6SNR"/>
<dbReference type="SMR" id="Q2FVZ4"/>
<dbReference type="STRING" id="93061.SAOUHSC_02527"/>
<dbReference type="PaxDb" id="1280-SAXN108_2511"/>
<dbReference type="GeneID" id="3921117"/>
<dbReference type="KEGG" id="sao:SAOUHSC_02527"/>
<dbReference type="PATRIC" id="fig|93061.5.peg.2279"/>
<dbReference type="eggNOG" id="COG2348">
    <property type="taxonomic scope" value="Bacteria"/>
</dbReference>
<dbReference type="HOGENOM" id="CLU_048411_0_1_9"/>
<dbReference type="OrthoDB" id="9785911at2"/>
<dbReference type="PRO" id="PR:Q2FVZ4"/>
<dbReference type="Proteomes" id="UP000008816">
    <property type="component" value="Chromosome"/>
</dbReference>
<dbReference type="GO" id="GO:0005737">
    <property type="term" value="C:cytoplasm"/>
    <property type="evidence" value="ECO:0007669"/>
    <property type="project" value="UniProtKB-SubCell"/>
</dbReference>
<dbReference type="GO" id="GO:0016755">
    <property type="term" value="F:aminoacyltransferase activity"/>
    <property type="evidence" value="ECO:0007669"/>
    <property type="project" value="InterPro"/>
</dbReference>
<dbReference type="GO" id="GO:0071555">
    <property type="term" value="P:cell wall organization"/>
    <property type="evidence" value="ECO:0007669"/>
    <property type="project" value="UniProtKB-KW"/>
</dbReference>
<dbReference type="GO" id="GO:0009252">
    <property type="term" value="P:peptidoglycan biosynthetic process"/>
    <property type="evidence" value="ECO:0007669"/>
    <property type="project" value="UniProtKB-KW"/>
</dbReference>
<dbReference type="GO" id="GO:0008360">
    <property type="term" value="P:regulation of cell shape"/>
    <property type="evidence" value="ECO:0007669"/>
    <property type="project" value="UniProtKB-KW"/>
</dbReference>
<dbReference type="GO" id="GO:0046677">
    <property type="term" value="P:response to antibiotic"/>
    <property type="evidence" value="ECO:0007669"/>
    <property type="project" value="UniProtKB-KW"/>
</dbReference>
<dbReference type="Gene3D" id="1.20.58.90">
    <property type="match status" value="1"/>
</dbReference>
<dbReference type="Gene3D" id="3.40.630.30">
    <property type="match status" value="2"/>
</dbReference>
<dbReference type="InterPro" id="IPR016181">
    <property type="entry name" value="Acyl_CoA_acyltransferase"/>
</dbReference>
<dbReference type="InterPro" id="IPR003447">
    <property type="entry name" value="FEMABX"/>
</dbReference>
<dbReference type="InterPro" id="IPR050644">
    <property type="entry name" value="PG_Glycine_Bridge_Synth"/>
</dbReference>
<dbReference type="PANTHER" id="PTHR36174">
    <property type="entry name" value="LIPID II:GLYCINE GLYCYLTRANSFERASE"/>
    <property type="match status" value="1"/>
</dbReference>
<dbReference type="PANTHER" id="PTHR36174:SF1">
    <property type="entry name" value="LIPID II:GLYCINE GLYCYLTRANSFERASE"/>
    <property type="match status" value="1"/>
</dbReference>
<dbReference type="Pfam" id="PF02388">
    <property type="entry name" value="FemAB"/>
    <property type="match status" value="1"/>
</dbReference>
<dbReference type="SUPFAM" id="SSF55729">
    <property type="entry name" value="Acyl-CoA N-acyltransferases (Nat)"/>
    <property type="match status" value="2"/>
</dbReference>
<dbReference type="PROSITE" id="PS51191">
    <property type="entry name" value="FEMABX"/>
    <property type="match status" value="1"/>
</dbReference>
<name>FEMX_STAA8</name>
<accession>Q2FVZ4</accession>
<accession>Q9RQG7</accession>
<accession>Q9X4D7</accession>
<keyword id="KW-0002">3D-structure</keyword>
<keyword id="KW-0012">Acyltransferase</keyword>
<keyword id="KW-0046">Antibiotic resistance</keyword>
<keyword id="KW-0133">Cell shape</keyword>
<keyword id="KW-0961">Cell wall biogenesis/degradation</keyword>
<keyword id="KW-0963">Cytoplasm</keyword>
<keyword id="KW-0573">Peptidoglycan synthesis</keyword>
<keyword id="KW-1185">Reference proteome</keyword>
<keyword id="KW-0808">Transferase</keyword>
<organism>
    <name type="scientific">Staphylococcus aureus (strain NCTC 8325 / PS 47)</name>
    <dbReference type="NCBI Taxonomy" id="93061"/>
    <lineage>
        <taxon>Bacteria</taxon>
        <taxon>Bacillati</taxon>
        <taxon>Bacillota</taxon>
        <taxon>Bacilli</taxon>
        <taxon>Bacillales</taxon>
        <taxon>Staphylococcaceae</taxon>
        <taxon>Staphylococcus</taxon>
    </lineage>
</organism>
<comment type="function">
    <text evidence="1 2 3">Catalyzes the incorporation of the first glycine of the pentaglycine interpeptide bridge, which is characteristic of the S.aureus peptidoglycan. This glycine is added to the epsilon-amino group of the L-lysine of the membrane-bound lipid II intermediate (GlcNAc-(beta-1,4)-N-acetylmuramic acid(-L-Ala-D-iGln-L-Lys-D-Ala-D-Ala)-pyrophosphoryl-undecaprenol), using glycyl-tRNA(Gly) as donor, in a ribosome-independent mechanism. Involved in methicillin resistance.</text>
</comment>
<comment type="catalytic activity">
    <reaction evidence="2">
        <text>beta-D-GlcNAc-(1-&gt;4)-Mur2Ac(oyl-L-Ala-D-isoglutaminyl-L-Lys-D-Ala-D-Ala)-di-trans,octa-cis-undecaprenyl diphosphate + glycyl-tRNA(Gly) = beta-D-GlcNAc-(1-&gt;4)-Mur2Ac(oyl-L-Ala-D-isoglutaminyl-L-Lys-(N(6)-Gly)-D-Ala-D-Ala)-di-trans,octa-cis-undecaprenyl diphosphate + tRNA(Gly) + H(+)</text>
        <dbReference type="Rhea" id="RHEA:30435"/>
        <dbReference type="Rhea" id="RHEA-COMP:9664"/>
        <dbReference type="Rhea" id="RHEA-COMP:9683"/>
        <dbReference type="ChEBI" id="CHEBI:15378"/>
        <dbReference type="ChEBI" id="CHEBI:62233"/>
        <dbReference type="ChEBI" id="CHEBI:62234"/>
        <dbReference type="ChEBI" id="CHEBI:78442"/>
        <dbReference type="ChEBI" id="CHEBI:78522"/>
        <dbReference type="EC" id="2.3.2.16"/>
    </reaction>
</comment>
<comment type="subunit">
    <text evidence="5">Monomer.</text>
</comment>
<comment type="subcellular location">
    <subcellularLocation>
        <location evidence="4">Cytoplasm</location>
    </subcellularLocation>
</comment>
<comment type="miscellaneous">
    <text>Since cross-linking between the peptide strands is critical for maintaining stability of the cell wall, FemX is a potential target for the development of new antibacterial agents.</text>
</comment>
<comment type="similarity">
    <text evidence="4">Belongs to the FemABX family.</text>
</comment>
<evidence type="ECO:0000269" key="1">
    <source>
    </source>
</evidence>
<evidence type="ECO:0000269" key="2">
    <source>
    </source>
</evidence>
<evidence type="ECO:0000269" key="3">
    <source>
    </source>
</evidence>
<evidence type="ECO:0000305" key="4"/>
<evidence type="ECO:0000305" key="5">
    <source>
    </source>
</evidence>
<proteinExistence type="evidence at protein level"/>
<feature type="chain" id="PRO_0000247019" description="Lipid II:glycine glycyltransferase">
    <location>
        <begin position="1"/>
        <end position="421"/>
    </location>
</feature>
<feature type="sequence conflict" description="In Ref. 1; AAF14182." evidence="4" ref="1">
    <original>A</original>
    <variation>T</variation>
    <location>
        <position position="102"/>
    </location>
</feature>